<dbReference type="EC" id="3.5.1.-"/>
<dbReference type="EMBL" id="L18897">
    <property type="protein sequence ID" value="AAB51163.1"/>
    <property type="molecule type" value="Genomic_DNA"/>
</dbReference>
<dbReference type="EMBL" id="AP009384">
    <property type="protein sequence ID" value="BAF89815.1"/>
    <property type="molecule type" value="Genomic_DNA"/>
</dbReference>
<dbReference type="PIR" id="JQ0394">
    <property type="entry name" value="JQ0394"/>
</dbReference>
<dbReference type="SMR" id="Q07740"/>
<dbReference type="STRING" id="438753.AZC_3817"/>
<dbReference type="KEGG" id="azc:AZC_3817"/>
<dbReference type="eggNOG" id="COG0726">
    <property type="taxonomic scope" value="Bacteria"/>
</dbReference>
<dbReference type="HOGENOM" id="CLU_021264_0_0_5"/>
<dbReference type="Proteomes" id="UP000000270">
    <property type="component" value="Chromosome"/>
</dbReference>
<dbReference type="GO" id="GO:0005737">
    <property type="term" value="C:cytoplasm"/>
    <property type="evidence" value="ECO:0007669"/>
    <property type="project" value="UniProtKB-SubCell"/>
</dbReference>
<dbReference type="GO" id="GO:0016020">
    <property type="term" value="C:membrane"/>
    <property type="evidence" value="ECO:0007669"/>
    <property type="project" value="TreeGrafter"/>
</dbReference>
<dbReference type="GO" id="GO:0016810">
    <property type="term" value="F:hydrolase activity, acting on carbon-nitrogen (but not peptide) bonds"/>
    <property type="evidence" value="ECO:0007669"/>
    <property type="project" value="InterPro"/>
</dbReference>
<dbReference type="GO" id="GO:0046872">
    <property type="term" value="F:metal ion binding"/>
    <property type="evidence" value="ECO:0007669"/>
    <property type="project" value="UniProtKB-KW"/>
</dbReference>
<dbReference type="GO" id="GO:0005975">
    <property type="term" value="P:carbohydrate metabolic process"/>
    <property type="evidence" value="ECO:0007669"/>
    <property type="project" value="InterPro"/>
</dbReference>
<dbReference type="CDD" id="cd10943">
    <property type="entry name" value="CE4_NodB"/>
    <property type="match status" value="1"/>
</dbReference>
<dbReference type="Gene3D" id="3.20.20.370">
    <property type="entry name" value="Glycoside hydrolase/deacetylase"/>
    <property type="match status" value="1"/>
</dbReference>
<dbReference type="InterPro" id="IPR011330">
    <property type="entry name" value="Glyco_hydro/deAcase_b/a-brl"/>
</dbReference>
<dbReference type="InterPro" id="IPR002509">
    <property type="entry name" value="NODB_dom"/>
</dbReference>
<dbReference type="InterPro" id="IPR026402">
    <property type="entry name" value="Nodulat_NodB"/>
</dbReference>
<dbReference type="InterPro" id="IPR050248">
    <property type="entry name" value="Polysacc_deacetylase_ArnD"/>
</dbReference>
<dbReference type="NCBIfam" id="TIGR04243">
    <property type="entry name" value="nodulat_NodB"/>
    <property type="match status" value="1"/>
</dbReference>
<dbReference type="PANTHER" id="PTHR10587:SF133">
    <property type="entry name" value="CHITIN DEACETYLASE 1-RELATED"/>
    <property type="match status" value="1"/>
</dbReference>
<dbReference type="PANTHER" id="PTHR10587">
    <property type="entry name" value="GLYCOSYL TRANSFERASE-RELATED"/>
    <property type="match status" value="1"/>
</dbReference>
<dbReference type="Pfam" id="PF01522">
    <property type="entry name" value="Polysacc_deac_1"/>
    <property type="match status" value="1"/>
</dbReference>
<dbReference type="SUPFAM" id="SSF88713">
    <property type="entry name" value="Glycoside hydrolase/deacetylase"/>
    <property type="match status" value="1"/>
</dbReference>
<dbReference type="PROSITE" id="PS51677">
    <property type="entry name" value="NODB"/>
    <property type="match status" value="1"/>
</dbReference>
<accession>Q07740</accession>
<accession>A8IP10</accession>
<sequence length="210" mass="23348">MSVLGQAARITQNQSSIYITFDDGPHPSVTPAVCEILREHSALATFFQIGRFAKEYPSISRQCQLDGHAIGNHTFDHPNLQDRAGEEVEYQISSAQKCLEHICGRGFVRHFRAPYGAWSTQILNVVNKIGLRPVSWSVDPRDWEAPRIENLINEILDNARPGSIILLHDGCPPDEAAMWDVRGGRAQTLAALRYVVPALQARGFALQPLP</sequence>
<organism>
    <name type="scientific">Azorhizobium caulinodans (strain ATCC 43989 / DSM 5975 / JCM 20966 / LMG 6465 / NBRC 14845 / NCIMB 13405 / ORS 571)</name>
    <dbReference type="NCBI Taxonomy" id="438753"/>
    <lineage>
        <taxon>Bacteria</taxon>
        <taxon>Pseudomonadati</taxon>
        <taxon>Pseudomonadota</taxon>
        <taxon>Alphaproteobacteria</taxon>
        <taxon>Hyphomicrobiales</taxon>
        <taxon>Xanthobacteraceae</taxon>
        <taxon>Azorhizobium</taxon>
    </lineage>
</organism>
<keyword id="KW-0963">Cytoplasm</keyword>
<keyword id="KW-0378">Hydrolase</keyword>
<keyword id="KW-0479">Metal-binding</keyword>
<keyword id="KW-0536">Nodulation</keyword>
<keyword id="KW-1185">Reference proteome</keyword>
<protein>
    <recommendedName>
        <fullName>Chitooligosaccharide deacetylase</fullName>
        <ecNumber>3.5.1.-</ecNumber>
    </recommendedName>
    <alternativeName>
        <fullName>Nodulation protein B</fullName>
    </alternativeName>
</protein>
<reference key="1">
    <citation type="journal article" date="1989" name="Mol. Gen. Genet.">
        <title>Common nodABC genes in Nod locus 1 of Azorhizobium caulinodans: nucleotide sequence and plant-inducible expression.</title>
        <authorList>
            <person name="Goethals K."/>
            <person name="Gao M."/>
            <person name="Tomekpe K."/>
            <person name="van Montagu M."/>
            <person name="Holsters M."/>
        </authorList>
    </citation>
    <scope>NUCLEOTIDE SEQUENCE [GENOMIC DNA]</scope>
</reference>
<reference key="2">
    <citation type="submission" date="2007-04" db="EMBL/GenBank/DDBJ databases">
        <title>Complete genome sequence of the nitrogen-fixing bacterium Azorhizobium caulinodans ORS571.</title>
        <authorList>
            <person name="Lee K.B."/>
            <person name="Backer P.D."/>
            <person name="Aono T."/>
            <person name="Liu C.T."/>
            <person name="Suzuki S."/>
            <person name="Suzuki T."/>
            <person name="Kaneko T."/>
            <person name="Yamada M."/>
            <person name="Tabata S."/>
            <person name="Kupfer D.M."/>
            <person name="Najar F.Z."/>
            <person name="Wiley G.B."/>
            <person name="Roe B."/>
            <person name="Binnewies T."/>
            <person name="Ussery D."/>
            <person name="Vereecke D."/>
            <person name="Gevers D."/>
            <person name="Holsters M."/>
            <person name="Oyaizu H."/>
        </authorList>
    </citation>
    <scope>NUCLEOTIDE SEQUENCE [LARGE SCALE GENOMIC DNA]</scope>
    <source>
        <strain>ATCC 43989 / DSM 5975 / JCM 20966 / LMG 6465 / NBRC 14845 / NCIMB 13405 / ORS 571</strain>
    </source>
</reference>
<proteinExistence type="inferred from homology"/>
<feature type="chain" id="PRO_0000172746" description="Chitooligosaccharide deacetylase">
    <location>
        <begin position="1"/>
        <end position="210"/>
    </location>
</feature>
<feature type="domain" description="NodB homology" evidence="2">
    <location>
        <begin position="15"/>
        <end position="207"/>
    </location>
</feature>
<feature type="active site" description="Proton acceptor" evidence="1">
    <location>
        <position position="22"/>
    </location>
</feature>
<feature type="active site" description="Proton donor" evidence="1">
    <location>
        <position position="168"/>
    </location>
</feature>
<feature type="binding site" evidence="1">
    <location>
        <position position="73"/>
    </location>
    <ligand>
        <name>a divalent metal cation</name>
        <dbReference type="ChEBI" id="CHEBI:60240"/>
    </ligand>
</feature>
<feature type="binding site" evidence="1">
    <location>
        <position position="77"/>
    </location>
    <ligand>
        <name>a divalent metal cation</name>
        <dbReference type="ChEBI" id="CHEBI:60240"/>
    </ligand>
</feature>
<feature type="site" description="Raises pKa of active site His" evidence="1">
    <location>
        <position position="142"/>
    </location>
</feature>
<feature type="sequence conflict" description="In Ref. 1; AAB51163." evidence="3" ref="1">
    <original>AT</original>
    <variation>TA</variation>
    <location>
        <begin position="44"/>
        <end position="45"/>
    </location>
</feature>
<feature type="sequence conflict" description="In Ref. 1; AAB51163." evidence="3" ref="1">
    <original>A</original>
    <variation>T</variation>
    <location>
        <position position="53"/>
    </location>
</feature>
<feature type="sequence conflict" description="In Ref. 1; AAB51163." evidence="3" ref="1">
    <original>S</original>
    <variation>P</variation>
    <location>
        <position position="137"/>
    </location>
</feature>
<feature type="sequence conflict" description="In Ref. 1; AAB51163." evidence="3" ref="1">
    <original>G</original>
    <variation>S</variation>
    <location>
        <position position="162"/>
    </location>
</feature>
<evidence type="ECO:0000250" key="1"/>
<evidence type="ECO:0000255" key="2">
    <source>
        <dbReference type="PROSITE-ProRule" id="PRU01014"/>
    </source>
</evidence>
<evidence type="ECO:0000305" key="3"/>
<name>NODB_AZOC5</name>
<comment type="function">
    <text>Is involved in generating a small heat-stable compound (Nod), an acylated oligomer of N-acetylglucosamine, that stimulates mitosis in various plant protoplasts.</text>
</comment>
<comment type="subcellular location">
    <subcellularLocation>
        <location>Cytoplasm</location>
    </subcellularLocation>
</comment>
<comment type="similarity">
    <text evidence="3">Belongs to the polysaccharide deacetylase family.</text>
</comment>
<gene>
    <name type="primary">nodB</name>
    <name type="ordered locus">AZC_3817</name>
</gene>